<proteinExistence type="inferred from homology"/>
<reference key="1">
    <citation type="journal article" date="2004" name="PLoS Biol.">
        <title>Genomic insights into methanotrophy: the complete genome sequence of Methylococcus capsulatus (Bath).</title>
        <authorList>
            <person name="Ward N.L."/>
            <person name="Larsen O."/>
            <person name="Sakwa J."/>
            <person name="Bruseth L."/>
            <person name="Khouri H.M."/>
            <person name="Durkin A.S."/>
            <person name="Dimitrov G."/>
            <person name="Jiang L."/>
            <person name="Scanlan D."/>
            <person name="Kang K.H."/>
            <person name="Lewis M.R."/>
            <person name="Nelson K.E."/>
            <person name="Methe B.A."/>
            <person name="Wu M."/>
            <person name="Heidelberg J.F."/>
            <person name="Paulsen I.T."/>
            <person name="Fouts D.E."/>
            <person name="Ravel J."/>
            <person name="Tettelin H."/>
            <person name="Ren Q."/>
            <person name="Read T.D."/>
            <person name="DeBoy R.T."/>
            <person name="Seshadri R."/>
            <person name="Salzberg S.L."/>
            <person name="Jensen H.B."/>
            <person name="Birkeland N.K."/>
            <person name="Nelson W.C."/>
            <person name="Dodson R.J."/>
            <person name="Grindhaug S.H."/>
            <person name="Holt I.E."/>
            <person name="Eidhammer I."/>
            <person name="Jonasen I."/>
            <person name="Vanaken S."/>
            <person name="Utterback T.R."/>
            <person name="Feldblyum T.V."/>
            <person name="Fraser C.M."/>
            <person name="Lillehaug J.R."/>
            <person name="Eisen J.A."/>
        </authorList>
    </citation>
    <scope>NUCLEOTIDE SEQUENCE [LARGE SCALE GENOMIC DNA]</scope>
    <source>
        <strain>ATCC 33009 / NCIMB 11132 / Bath</strain>
    </source>
</reference>
<feature type="chain" id="PRO_0000177698" description="Peptide chain release factor 1">
    <location>
        <begin position="1"/>
        <end position="360"/>
    </location>
</feature>
<feature type="modified residue" description="N5-methylglutamine" evidence="1">
    <location>
        <position position="236"/>
    </location>
</feature>
<name>RF1_METCA</name>
<organism>
    <name type="scientific">Methylococcus capsulatus (strain ATCC 33009 / NCIMB 11132 / Bath)</name>
    <dbReference type="NCBI Taxonomy" id="243233"/>
    <lineage>
        <taxon>Bacteria</taxon>
        <taxon>Pseudomonadati</taxon>
        <taxon>Pseudomonadota</taxon>
        <taxon>Gammaproteobacteria</taxon>
        <taxon>Methylococcales</taxon>
        <taxon>Methylococcaceae</taxon>
        <taxon>Methylococcus</taxon>
    </lineage>
</organism>
<keyword id="KW-0963">Cytoplasm</keyword>
<keyword id="KW-0488">Methylation</keyword>
<keyword id="KW-0648">Protein biosynthesis</keyword>
<keyword id="KW-1185">Reference proteome</keyword>
<comment type="function">
    <text evidence="1">Peptide chain release factor 1 directs the termination of translation in response to the peptide chain termination codons UAG and UAA.</text>
</comment>
<comment type="subcellular location">
    <subcellularLocation>
        <location evidence="1">Cytoplasm</location>
    </subcellularLocation>
</comment>
<comment type="PTM">
    <text evidence="1">Methylated by PrmC. Methylation increases the termination efficiency of RF1.</text>
</comment>
<comment type="similarity">
    <text evidence="1">Belongs to the prokaryotic/mitochondrial release factor family.</text>
</comment>
<sequence length="360" mass="40508">MNPSVQQKLENLSHRFEEITGLLATPEVQNDQNRFKALSREYAQLEPCVACFRRYRETLEGLDHAQALLQDPDPEVRSLAREELETGRKRCDALEQELQILLLPRDPNDERNVFLEVRAGTGGAEAAIFAGDLQRMYSRYAERQGWRAEIVSESEGEHGGYKEVVMRISGQNVYSRLKFEAGTHRVQRVPTTEAQGRIHTSACTVAILPEFDDVEIDINPADLRIDTFRASGAGGQHVNRTDSAIRITHIPTGTVVECQDERSQHKNRARAMSLLQARILAAAQEKQNSEIAASRKLQVGSGDRSERIRTYNFPQGRLTDHRINLTIYRLDAIMEGDLDPVIDPLLQEHQADMLASLAGS</sequence>
<evidence type="ECO:0000255" key="1">
    <source>
        <dbReference type="HAMAP-Rule" id="MF_00093"/>
    </source>
</evidence>
<dbReference type="EMBL" id="AE017282">
    <property type="protein sequence ID" value="AAU92842.1"/>
    <property type="molecule type" value="Genomic_DNA"/>
</dbReference>
<dbReference type="RefSeq" id="WP_010960351.1">
    <property type="nucleotide sequence ID" value="NC_002977.6"/>
</dbReference>
<dbReference type="SMR" id="Q60A21"/>
<dbReference type="STRING" id="243233.MCA1051"/>
<dbReference type="GeneID" id="88223343"/>
<dbReference type="KEGG" id="mca:MCA1051"/>
<dbReference type="eggNOG" id="COG0216">
    <property type="taxonomic scope" value="Bacteria"/>
</dbReference>
<dbReference type="HOGENOM" id="CLU_036856_0_1_6"/>
<dbReference type="Proteomes" id="UP000006821">
    <property type="component" value="Chromosome"/>
</dbReference>
<dbReference type="GO" id="GO:0005737">
    <property type="term" value="C:cytoplasm"/>
    <property type="evidence" value="ECO:0007669"/>
    <property type="project" value="UniProtKB-SubCell"/>
</dbReference>
<dbReference type="GO" id="GO:0016149">
    <property type="term" value="F:translation release factor activity, codon specific"/>
    <property type="evidence" value="ECO:0007669"/>
    <property type="project" value="UniProtKB-UniRule"/>
</dbReference>
<dbReference type="FunFam" id="3.30.160.20:FF:000004">
    <property type="entry name" value="Peptide chain release factor 1"/>
    <property type="match status" value="1"/>
</dbReference>
<dbReference type="FunFam" id="3.30.70.1660:FF:000002">
    <property type="entry name" value="Peptide chain release factor 1"/>
    <property type="match status" value="1"/>
</dbReference>
<dbReference type="FunFam" id="3.30.70.1660:FF:000004">
    <property type="entry name" value="Peptide chain release factor 1"/>
    <property type="match status" value="1"/>
</dbReference>
<dbReference type="Gene3D" id="3.30.160.20">
    <property type="match status" value="1"/>
</dbReference>
<dbReference type="Gene3D" id="3.30.70.1660">
    <property type="match status" value="1"/>
</dbReference>
<dbReference type="Gene3D" id="6.10.140.1950">
    <property type="match status" value="1"/>
</dbReference>
<dbReference type="HAMAP" id="MF_00093">
    <property type="entry name" value="Rel_fac_1"/>
    <property type="match status" value="1"/>
</dbReference>
<dbReference type="InterPro" id="IPR005139">
    <property type="entry name" value="PCRF"/>
</dbReference>
<dbReference type="InterPro" id="IPR000352">
    <property type="entry name" value="Pep_chain_release_fac_I"/>
</dbReference>
<dbReference type="InterPro" id="IPR045853">
    <property type="entry name" value="Pep_chain_release_fac_I_sf"/>
</dbReference>
<dbReference type="InterPro" id="IPR050057">
    <property type="entry name" value="Prokaryotic/Mito_RF"/>
</dbReference>
<dbReference type="InterPro" id="IPR004373">
    <property type="entry name" value="RF-1"/>
</dbReference>
<dbReference type="NCBIfam" id="TIGR00019">
    <property type="entry name" value="prfA"/>
    <property type="match status" value="1"/>
</dbReference>
<dbReference type="NCBIfam" id="NF001859">
    <property type="entry name" value="PRK00591.1"/>
    <property type="match status" value="1"/>
</dbReference>
<dbReference type="PANTHER" id="PTHR43804">
    <property type="entry name" value="LD18447P"/>
    <property type="match status" value="1"/>
</dbReference>
<dbReference type="PANTHER" id="PTHR43804:SF7">
    <property type="entry name" value="LD18447P"/>
    <property type="match status" value="1"/>
</dbReference>
<dbReference type="Pfam" id="PF03462">
    <property type="entry name" value="PCRF"/>
    <property type="match status" value="1"/>
</dbReference>
<dbReference type="Pfam" id="PF00472">
    <property type="entry name" value="RF-1"/>
    <property type="match status" value="1"/>
</dbReference>
<dbReference type="SMART" id="SM00937">
    <property type="entry name" value="PCRF"/>
    <property type="match status" value="1"/>
</dbReference>
<dbReference type="SUPFAM" id="SSF75620">
    <property type="entry name" value="Release factor"/>
    <property type="match status" value="1"/>
</dbReference>
<dbReference type="PROSITE" id="PS00745">
    <property type="entry name" value="RF_PROK_I"/>
    <property type="match status" value="1"/>
</dbReference>
<gene>
    <name evidence="1" type="primary">prfA</name>
    <name type="ordered locus">MCA1051</name>
</gene>
<protein>
    <recommendedName>
        <fullName evidence="1">Peptide chain release factor 1</fullName>
        <shortName evidence="1">RF-1</shortName>
    </recommendedName>
</protein>
<accession>Q60A21</accession>